<dbReference type="EMBL" id="CP001184">
    <property type="protein sequence ID" value="ACI60204.1"/>
    <property type="molecule type" value="Genomic_DNA"/>
</dbReference>
<dbReference type="RefSeq" id="WP_004025782.1">
    <property type="nucleotide sequence ID" value="NC_011374.1"/>
</dbReference>
<dbReference type="SMR" id="B5ZB38"/>
<dbReference type="STRING" id="565575.UUR10_0224"/>
<dbReference type="GeneID" id="93848704"/>
<dbReference type="KEGG" id="uue:UUR10_0224"/>
<dbReference type="eggNOG" id="COG0292">
    <property type="taxonomic scope" value="Bacteria"/>
</dbReference>
<dbReference type="HOGENOM" id="CLU_123265_0_1_14"/>
<dbReference type="OrthoDB" id="9808966at2"/>
<dbReference type="Proteomes" id="UP000002018">
    <property type="component" value="Chromosome"/>
</dbReference>
<dbReference type="GO" id="GO:1990904">
    <property type="term" value="C:ribonucleoprotein complex"/>
    <property type="evidence" value="ECO:0007669"/>
    <property type="project" value="UniProtKB-KW"/>
</dbReference>
<dbReference type="GO" id="GO:0005840">
    <property type="term" value="C:ribosome"/>
    <property type="evidence" value="ECO:0007669"/>
    <property type="project" value="UniProtKB-KW"/>
</dbReference>
<dbReference type="GO" id="GO:0019843">
    <property type="term" value="F:rRNA binding"/>
    <property type="evidence" value="ECO:0007669"/>
    <property type="project" value="UniProtKB-UniRule"/>
</dbReference>
<dbReference type="GO" id="GO:0003735">
    <property type="term" value="F:structural constituent of ribosome"/>
    <property type="evidence" value="ECO:0007669"/>
    <property type="project" value="InterPro"/>
</dbReference>
<dbReference type="GO" id="GO:0000027">
    <property type="term" value="P:ribosomal large subunit assembly"/>
    <property type="evidence" value="ECO:0007669"/>
    <property type="project" value="UniProtKB-UniRule"/>
</dbReference>
<dbReference type="GO" id="GO:0006412">
    <property type="term" value="P:translation"/>
    <property type="evidence" value="ECO:0007669"/>
    <property type="project" value="InterPro"/>
</dbReference>
<dbReference type="CDD" id="cd07026">
    <property type="entry name" value="Ribosomal_L20"/>
    <property type="match status" value="1"/>
</dbReference>
<dbReference type="FunFam" id="1.10.1900.20:FF:000001">
    <property type="entry name" value="50S ribosomal protein L20"/>
    <property type="match status" value="1"/>
</dbReference>
<dbReference type="Gene3D" id="6.10.160.10">
    <property type="match status" value="1"/>
</dbReference>
<dbReference type="Gene3D" id="1.10.1900.20">
    <property type="entry name" value="Ribosomal protein L20"/>
    <property type="match status" value="1"/>
</dbReference>
<dbReference type="HAMAP" id="MF_00382">
    <property type="entry name" value="Ribosomal_bL20"/>
    <property type="match status" value="1"/>
</dbReference>
<dbReference type="InterPro" id="IPR005813">
    <property type="entry name" value="Ribosomal_bL20"/>
</dbReference>
<dbReference type="InterPro" id="IPR049946">
    <property type="entry name" value="RIBOSOMAL_L20_CS"/>
</dbReference>
<dbReference type="InterPro" id="IPR035566">
    <property type="entry name" value="Ribosomal_protein_bL20_C"/>
</dbReference>
<dbReference type="NCBIfam" id="TIGR01032">
    <property type="entry name" value="rplT_bact"/>
    <property type="match status" value="1"/>
</dbReference>
<dbReference type="PANTHER" id="PTHR10986">
    <property type="entry name" value="39S RIBOSOMAL PROTEIN L20"/>
    <property type="match status" value="1"/>
</dbReference>
<dbReference type="Pfam" id="PF00453">
    <property type="entry name" value="Ribosomal_L20"/>
    <property type="match status" value="1"/>
</dbReference>
<dbReference type="PRINTS" id="PR00062">
    <property type="entry name" value="RIBOSOMALL20"/>
</dbReference>
<dbReference type="SUPFAM" id="SSF74731">
    <property type="entry name" value="Ribosomal protein L20"/>
    <property type="match status" value="1"/>
</dbReference>
<dbReference type="PROSITE" id="PS00937">
    <property type="entry name" value="RIBOSOMAL_L20"/>
    <property type="match status" value="1"/>
</dbReference>
<gene>
    <name evidence="1" type="primary">rplT</name>
    <name type="ordered locus">UUR10_0224</name>
</gene>
<evidence type="ECO:0000255" key="1">
    <source>
        <dbReference type="HAMAP-Rule" id="MF_00382"/>
    </source>
</evidence>
<evidence type="ECO:0000305" key="2"/>
<protein>
    <recommendedName>
        <fullName evidence="1">Large ribosomal subunit protein bL20</fullName>
    </recommendedName>
    <alternativeName>
        <fullName evidence="2">50S ribosomal protein L20</fullName>
    </alternativeName>
</protein>
<name>RL20_UREU1</name>
<organism>
    <name type="scientific">Ureaplasma urealyticum serovar 10 (strain ATCC 33699 / Western)</name>
    <dbReference type="NCBI Taxonomy" id="565575"/>
    <lineage>
        <taxon>Bacteria</taxon>
        <taxon>Bacillati</taxon>
        <taxon>Mycoplasmatota</taxon>
        <taxon>Mycoplasmoidales</taxon>
        <taxon>Mycoplasmoidaceae</taxon>
        <taxon>Ureaplasma</taxon>
    </lineage>
</organism>
<proteinExistence type="inferred from homology"/>
<reference key="1">
    <citation type="submission" date="2008-10" db="EMBL/GenBank/DDBJ databases">
        <title>Genome sequence of Ureaplasma urealyticum serovar 10 ATCC-33699.</title>
        <authorList>
            <person name="Shrivastava S."/>
            <person name="Methe B.A."/>
            <person name="Glass J."/>
            <person name="White K."/>
            <person name="Duffy L.B."/>
        </authorList>
    </citation>
    <scope>NUCLEOTIDE SEQUENCE [LARGE SCALE GENOMIC DNA]</scope>
    <source>
        <strain>ATCC 33699 / Western</strain>
    </source>
</reference>
<feature type="chain" id="PRO_1000122389" description="Large ribosomal subunit protein bL20">
    <location>
        <begin position="1"/>
        <end position="120"/>
    </location>
</feature>
<sequence length="120" mass="14096">MRVKGGSVTRQRRKRWLEKAEGSWGTRNTSYRIARQTVIRAAEYAYRDRRNKKRDFRKLWISRINAAVRELGYTYSQFMNALVKANVVTKDGQGLNRKMLSELAINNPEAFNQLVNKVMK</sequence>
<accession>B5ZB38</accession>
<keyword id="KW-0687">Ribonucleoprotein</keyword>
<keyword id="KW-0689">Ribosomal protein</keyword>
<keyword id="KW-0694">RNA-binding</keyword>
<keyword id="KW-0699">rRNA-binding</keyword>
<comment type="function">
    <text evidence="1">Binds directly to 23S ribosomal RNA and is necessary for the in vitro assembly process of the 50S ribosomal subunit. It is not involved in the protein synthesizing functions of that subunit.</text>
</comment>
<comment type="similarity">
    <text evidence="1">Belongs to the bacterial ribosomal protein bL20 family.</text>
</comment>